<evidence type="ECO:0000255" key="1"/>
<evidence type="ECO:0000256" key="2">
    <source>
        <dbReference type="SAM" id="MobiDB-lite"/>
    </source>
</evidence>
<evidence type="ECO:0000269" key="3">
    <source>
    </source>
</evidence>
<evidence type="ECO:0000305" key="4"/>
<evidence type="ECO:0000312" key="5">
    <source>
        <dbReference type="EMBL" id="AAL02326.1"/>
    </source>
</evidence>
<dbReference type="EMBL" id="AY046319">
    <property type="protein sequence ID" value="AAL02326.1"/>
    <property type="molecule type" value="mRNA"/>
</dbReference>
<dbReference type="PIR" id="JC7755">
    <property type="entry name" value="JC7755"/>
</dbReference>
<dbReference type="GO" id="GO:0005576">
    <property type="term" value="C:extracellular region"/>
    <property type="evidence" value="ECO:0000314"/>
    <property type="project" value="UniProtKB"/>
</dbReference>
<dbReference type="GO" id="GO:0005179">
    <property type="term" value="F:hormone activity"/>
    <property type="evidence" value="ECO:0000303"/>
    <property type="project" value="UniProtKB"/>
</dbReference>
<dbReference type="GO" id="GO:0090729">
    <property type="term" value="F:toxin activity"/>
    <property type="evidence" value="ECO:0007669"/>
    <property type="project" value="UniProtKB-KW"/>
</dbReference>
<dbReference type="GO" id="GO:0006952">
    <property type="term" value="P:defense response"/>
    <property type="evidence" value="ECO:0000314"/>
    <property type="project" value="UniProtKB"/>
</dbReference>
<dbReference type="GO" id="GO:0045987">
    <property type="term" value="P:positive regulation of smooth muscle contraction"/>
    <property type="evidence" value="ECO:0000314"/>
    <property type="project" value="UniProtKB"/>
</dbReference>
<dbReference type="GO" id="GO:0042311">
    <property type="term" value="P:vasodilation"/>
    <property type="evidence" value="ECO:0007669"/>
    <property type="project" value="UniProtKB-KW"/>
</dbReference>
<dbReference type="InterPro" id="IPR009608">
    <property type="entry name" value="Bradykinin"/>
</dbReference>
<dbReference type="Pfam" id="PF06753">
    <property type="entry name" value="Bradykinin"/>
    <property type="match status" value="6"/>
</dbReference>
<reference evidence="4 5" key="1">
    <citation type="journal article" date="2001" name="Biochem. Biophys. Res. Commun.">
        <title>A novel bradykinin-related peptide from skin secretions of toad Bombina maxima and its precursor containing six identical copies of the final product.</title>
        <authorList>
            <person name="Lai R."/>
            <person name="Liu H."/>
            <person name="Lee W.H."/>
            <person name="Zhang Y."/>
        </authorList>
    </citation>
    <scope>NUCLEOTIDE SEQUENCE [MRNA]</scope>
    <scope>PROTEIN SEQUENCE OF 41-59</scope>
    <scope>FUNCTION</scope>
    <scope>SUBCELLULAR LOCATION</scope>
    <scope>TISSUE SPECIFICITY</scope>
    <scope>MASS SPECTROMETRY</scope>
    <source>
        <tissue evidence="5">Skin secretion</tissue>
    </source>
</reference>
<protein>
    <recommendedName>
        <fullName>Kininogen-1b</fullName>
    </recommendedName>
    <component>
        <recommendedName>
            <fullName>Maximakinin</fullName>
        </recommendedName>
        <alternativeName>
            <fullName>Bombinakinin M</fullName>
        </alternativeName>
    </component>
    <component>
        <recommendedName>
            <fullName>Bradykinin</fullName>
        </recommendedName>
    </component>
</protein>
<sequence>MRLWFCLSFFIVLCLEHFPETLADERNVPESEEKTEQYLRDLPKINRKGPRPPGFSPFRGKFHSQSLRDLPKINRKGPRPPGFSPFRGKFHSQSLRDLPKINRKGPRPPGFSPFRGKFHSQSLRDLPKINRKGPRPPGFSPFRGKFHSQSLRDLPKINRKGPRPPGFSPFRGKFHSQSLRDLPKINRKGPRPPGFSPFRGKFHSQSHV</sequence>
<keyword id="KW-0878">Amphibian defense peptide</keyword>
<keyword id="KW-0903">Direct protein sequencing</keyword>
<keyword id="KW-1213">G-protein coupled receptor impairing toxin</keyword>
<keyword id="KW-0677">Repeat</keyword>
<keyword id="KW-0964">Secreted</keyword>
<keyword id="KW-0732">Signal</keyword>
<keyword id="KW-0800">Toxin</keyword>
<keyword id="KW-0838">Vasoactive</keyword>
<keyword id="KW-0840">Vasodilator</keyword>
<feature type="signal peptide" evidence="1">
    <location>
        <begin position="1"/>
        <end position="23"/>
    </location>
</feature>
<feature type="chain" id="PRO_0000003403" description="Kininogen-1b" evidence="1">
    <location>
        <begin position="24"/>
        <end position="208"/>
    </location>
</feature>
<feature type="peptide" id="PRO_0000003404" description="Maximakinin" evidence="3">
    <location>
        <begin position="41"/>
        <end position="59"/>
    </location>
</feature>
<feature type="peptide" id="PRO_0000003405" description="Bradykinin" evidence="3">
    <location>
        <begin position="51"/>
        <end position="59"/>
    </location>
</feature>
<feature type="peptide" id="PRO_0000003406" description="Maximakinin" evidence="3">
    <location>
        <begin position="69"/>
        <end position="87"/>
    </location>
</feature>
<feature type="peptide" id="PRO_0000003407" description="Bradykinin" evidence="3">
    <location>
        <begin position="79"/>
        <end position="87"/>
    </location>
</feature>
<feature type="peptide" id="PRO_0000003408" description="Maximakinin" evidence="3">
    <location>
        <begin position="97"/>
        <end position="115"/>
    </location>
</feature>
<feature type="peptide" id="PRO_0000003409" description="Bradykinin" evidence="3">
    <location>
        <begin position="107"/>
        <end position="115"/>
    </location>
</feature>
<feature type="peptide" id="PRO_0000003410" description="Maximakinin" evidence="3">
    <location>
        <begin position="125"/>
        <end position="143"/>
    </location>
</feature>
<feature type="peptide" id="PRO_0000003411" description="Bradykinin" evidence="3">
    <location>
        <begin position="135"/>
        <end position="143"/>
    </location>
</feature>
<feature type="peptide" id="PRO_0000003412" description="Maximakinin" evidence="3">
    <location>
        <begin position="153"/>
        <end position="171"/>
    </location>
</feature>
<feature type="peptide" id="PRO_0000003413" description="Bradykinin" evidence="3">
    <location>
        <begin position="163"/>
        <end position="171"/>
    </location>
</feature>
<feature type="peptide" id="PRO_0000003414" description="Maximakinin" evidence="3">
    <location>
        <begin position="181"/>
        <end position="199"/>
    </location>
</feature>
<feature type="peptide" id="PRO_0000003415" description="Bradykinin" evidence="3">
    <location>
        <begin position="191"/>
        <end position="199"/>
    </location>
</feature>
<feature type="region of interest" description="Disordered" evidence="2">
    <location>
        <begin position="27"/>
        <end position="208"/>
    </location>
</feature>
<feature type="compositionally biased region" description="Basic and acidic residues" evidence="2">
    <location>
        <begin position="27"/>
        <end position="44"/>
    </location>
</feature>
<name>BRK1B_BOMMX</name>
<accession>Q90WZ1</accession>
<comment type="function">
    <text evidence="3">In vitro, produces constriction of guinea pig ileum smooth muscle. May target bradykinin receptors (BDKRB).</text>
</comment>
<comment type="subcellular location">
    <subcellularLocation>
        <location evidence="3">Secreted</location>
    </subcellularLocation>
</comment>
<comment type="tissue specificity">
    <text evidence="3">Expressed by the skin glands.</text>
</comment>
<comment type="mass spectrometry">
    <molecule>Maximakinin</molecule>
</comment>
<comment type="similarity">
    <text evidence="4">Belongs to the bradykinin-related peptide family.</text>
</comment>
<organism>
    <name type="scientific">Bombina maxima</name>
    <name type="common">Giant fire-bellied toad</name>
    <name type="synonym">Chinese red belly toad</name>
    <dbReference type="NCBI Taxonomy" id="161274"/>
    <lineage>
        <taxon>Eukaryota</taxon>
        <taxon>Metazoa</taxon>
        <taxon>Chordata</taxon>
        <taxon>Craniata</taxon>
        <taxon>Vertebrata</taxon>
        <taxon>Euteleostomi</taxon>
        <taxon>Amphibia</taxon>
        <taxon>Batrachia</taxon>
        <taxon>Anura</taxon>
        <taxon>Bombinatoridae</taxon>
        <taxon>Bombina</taxon>
    </lineage>
</organism>
<proteinExistence type="evidence at protein level"/>